<name>KHPA_CALS4</name>
<gene>
    <name evidence="1" type="primary">khpA</name>
    <name type="ordered locus">TTE1460</name>
</gene>
<reference key="1">
    <citation type="journal article" date="2002" name="Genome Res.">
        <title>A complete sequence of the T. tengcongensis genome.</title>
        <authorList>
            <person name="Bao Q."/>
            <person name="Tian Y."/>
            <person name="Li W."/>
            <person name="Xu Z."/>
            <person name="Xuan Z."/>
            <person name="Hu S."/>
            <person name="Dong W."/>
            <person name="Yang J."/>
            <person name="Chen Y."/>
            <person name="Xue Y."/>
            <person name="Xu Y."/>
            <person name="Lai X."/>
            <person name="Huang L."/>
            <person name="Dong X."/>
            <person name="Ma Y."/>
            <person name="Ling L."/>
            <person name="Tan H."/>
            <person name="Chen R."/>
            <person name="Wang J."/>
            <person name="Yu J."/>
            <person name="Yang H."/>
        </authorList>
    </citation>
    <scope>NUCLEOTIDE SEQUENCE [LARGE SCALE GENOMIC DNA]</scope>
    <source>
        <strain>DSM 15242 / JCM 11007 / NBRC 100824 / MB4</strain>
    </source>
</reference>
<sequence>MGELVKTIAKALVDNPDAVEVNEIHGHQSIIIELKVAPEDMGKVIGKQGRIAQAIRTLVKAAALKEKKRVIVEII</sequence>
<accession>Q8R9X2</accession>
<comment type="function">
    <text evidence="1">A probable RNA chaperone. Forms a complex with KhpB which binds to cellular RNA and controls its expression. Plays a role in peptidoglycan (PG) homeostasis and cell length regulation.</text>
</comment>
<comment type="subunit">
    <text evidence="1">Forms a complex with KhpB.</text>
</comment>
<comment type="subcellular location">
    <subcellularLocation>
        <location evidence="1">Cytoplasm</location>
    </subcellularLocation>
</comment>
<comment type="similarity">
    <text evidence="1">Belongs to the KhpA RNA-binding protein family.</text>
</comment>
<evidence type="ECO:0000255" key="1">
    <source>
        <dbReference type="HAMAP-Rule" id="MF_00088"/>
    </source>
</evidence>
<organism>
    <name type="scientific">Caldanaerobacter subterraneus subsp. tengcongensis (strain DSM 15242 / JCM 11007 / NBRC 100824 / MB4)</name>
    <name type="common">Thermoanaerobacter tengcongensis</name>
    <dbReference type="NCBI Taxonomy" id="273068"/>
    <lineage>
        <taxon>Bacteria</taxon>
        <taxon>Bacillati</taxon>
        <taxon>Bacillota</taxon>
        <taxon>Clostridia</taxon>
        <taxon>Thermoanaerobacterales</taxon>
        <taxon>Thermoanaerobacteraceae</taxon>
        <taxon>Caldanaerobacter</taxon>
    </lineage>
</organism>
<protein>
    <recommendedName>
        <fullName evidence="1">RNA-binding protein KhpA</fullName>
    </recommendedName>
    <alternativeName>
        <fullName evidence="1">KH-domain protein A</fullName>
    </alternativeName>
</protein>
<keyword id="KW-0133">Cell shape</keyword>
<keyword id="KW-0961">Cell wall biogenesis/degradation</keyword>
<keyword id="KW-0143">Chaperone</keyword>
<keyword id="KW-0963">Cytoplasm</keyword>
<keyword id="KW-1185">Reference proteome</keyword>
<keyword id="KW-0694">RNA-binding</keyword>
<feature type="chain" id="PRO_0000163237" description="RNA-binding protein KhpA">
    <location>
        <begin position="1"/>
        <end position="75"/>
    </location>
</feature>
<feature type="domain" description="KH" evidence="1">
    <location>
        <begin position="29"/>
        <end position="75"/>
    </location>
</feature>
<proteinExistence type="inferred from homology"/>
<dbReference type="EMBL" id="AE008691">
    <property type="protein sequence ID" value="AAM24682.1"/>
    <property type="molecule type" value="Genomic_DNA"/>
</dbReference>
<dbReference type="RefSeq" id="WP_011025727.1">
    <property type="nucleotide sequence ID" value="NZ_JANUCV010000001.1"/>
</dbReference>
<dbReference type="SMR" id="Q8R9X2"/>
<dbReference type="STRING" id="273068.TTE1460"/>
<dbReference type="KEGG" id="tte:TTE1460"/>
<dbReference type="eggNOG" id="COG1837">
    <property type="taxonomic scope" value="Bacteria"/>
</dbReference>
<dbReference type="HOGENOM" id="CLU_132074_1_0_9"/>
<dbReference type="OrthoDB" id="9812389at2"/>
<dbReference type="Proteomes" id="UP000000555">
    <property type="component" value="Chromosome"/>
</dbReference>
<dbReference type="GO" id="GO:0005737">
    <property type="term" value="C:cytoplasm"/>
    <property type="evidence" value="ECO:0007669"/>
    <property type="project" value="UniProtKB-SubCell"/>
</dbReference>
<dbReference type="GO" id="GO:0003723">
    <property type="term" value="F:RNA binding"/>
    <property type="evidence" value="ECO:0007669"/>
    <property type="project" value="UniProtKB-UniRule"/>
</dbReference>
<dbReference type="GO" id="GO:0071555">
    <property type="term" value="P:cell wall organization"/>
    <property type="evidence" value="ECO:0007669"/>
    <property type="project" value="UniProtKB-KW"/>
</dbReference>
<dbReference type="GO" id="GO:0009252">
    <property type="term" value="P:peptidoglycan biosynthetic process"/>
    <property type="evidence" value="ECO:0007669"/>
    <property type="project" value="UniProtKB-UniRule"/>
</dbReference>
<dbReference type="GO" id="GO:0008360">
    <property type="term" value="P:regulation of cell shape"/>
    <property type="evidence" value="ECO:0007669"/>
    <property type="project" value="UniProtKB-KW"/>
</dbReference>
<dbReference type="CDD" id="cd22533">
    <property type="entry name" value="KH-II_YlqC-like"/>
    <property type="match status" value="1"/>
</dbReference>
<dbReference type="Gene3D" id="3.30.300.20">
    <property type="match status" value="1"/>
</dbReference>
<dbReference type="HAMAP" id="MF_00088">
    <property type="entry name" value="KhpA"/>
    <property type="match status" value="1"/>
</dbReference>
<dbReference type="InterPro" id="IPR015946">
    <property type="entry name" value="KH_dom-like_a/b"/>
</dbReference>
<dbReference type="InterPro" id="IPR009019">
    <property type="entry name" value="KH_sf_prok-type"/>
</dbReference>
<dbReference type="InterPro" id="IPR020627">
    <property type="entry name" value="KhpA"/>
</dbReference>
<dbReference type="NCBIfam" id="NF001748">
    <property type="entry name" value="PRK00468.1"/>
    <property type="match status" value="1"/>
</dbReference>
<dbReference type="PANTHER" id="PTHR34654:SF1">
    <property type="entry name" value="RNA-BINDING PROTEIN KHPA"/>
    <property type="match status" value="1"/>
</dbReference>
<dbReference type="PANTHER" id="PTHR34654">
    <property type="entry name" value="UPF0109 PROTEIN SCO5592"/>
    <property type="match status" value="1"/>
</dbReference>
<dbReference type="Pfam" id="PF13083">
    <property type="entry name" value="KH_KhpA-B"/>
    <property type="match status" value="1"/>
</dbReference>
<dbReference type="SUPFAM" id="SSF54814">
    <property type="entry name" value="Prokaryotic type KH domain (KH-domain type II)"/>
    <property type="match status" value="1"/>
</dbReference>